<proteinExistence type="inferred from homology"/>
<gene>
    <name type="primary">CBP4</name>
    <name type="ORF">SNOG_07447</name>
</gene>
<sequence>MPSMGTYIKAISGGAILCIGGPALVMWVTPTEEEIFKRYSPELQKKALARREQTQQDFDNFTTQLKELSKSEKPIWIAQKEADSHRSETEAQAKRDERDAYAAESRRRQAEIRASSQ</sequence>
<protein>
    <recommendedName>
        <fullName>Assembly factor CBP4</fullName>
    </recommendedName>
    <alternativeName>
        <fullName>Cytochrome b mRNA-processing protein 4</fullName>
    </alternativeName>
</protein>
<name>CBP4_PHANO</name>
<accession>Q0ULB7</accession>
<comment type="function">
    <text evidence="1">Essential for the assembly of ubiquinol-cytochrome c reductase. It has a direct effect on the correct occurrence of the Rieske protein, core 4, core 5 and apocytochrome b (By similarity).</text>
</comment>
<comment type="subcellular location">
    <subcellularLocation>
        <location evidence="1">Mitochondrion inner membrane</location>
        <topology evidence="1">Single-pass membrane protein</topology>
    </subcellularLocation>
</comment>
<comment type="similarity">
    <text evidence="4">Belongs to the CBP4 family.</text>
</comment>
<evidence type="ECO:0000250" key="1"/>
<evidence type="ECO:0000255" key="2"/>
<evidence type="ECO:0000256" key="3">
    <source>
        <dbReference type="SAM" id="MobiDB-lite"/>
    </source>
</evidence>
<evidence type="ECO:0000305" key="4"/>
<dbReference type="EMBL" id="CH445335">
    <property type="protein sequence ID" value="EAT84913.2"/>
    <property type="molecule type" value="Genomic_DNA"/>
</dbReference>
<dbReference type="RefSeq" id="XP_001797780.1">
    <property type="nucleotide sequence ID" value="XM_001797728.1"/>
</dbReference>
<dbReference type="SMR" id="Q0ULB7"/>
<dbReference type="EnsemblFungi" id="SNOT_07447">
    <property type="protein sequence ID" value="SNOT_07447"/>
    <property type="gene ID" value="SNOG_07447"/>
</dbReference>
<dbReference type="GeneID" id="5974673"/>
<dbReference type="KEGG" id="pno:SNOG_07447"/>
<dbReference type="VEuPathDB" id="FungiDB:JI435_074470"/>
<dbReference type="eggNOG" id="ENOG502S2G8">
    <property type="taxonomic scope" value="Eukaryota"/>
</dbReference>
<dbReference type="HOGENOM" id="CLU_136894_0_0_1"/>
<dbReference type="InParanoid" id="Q0ULB7"/>
<dbReference type="OrthoDB" id="5576752at2759"/>
<dbReference type="Proteomes" id="UP000001055">
    <property type="component" value="Unassembled WGS sequence"/>
</dbReference>
<dbReference type="GO" id="GO:0005743">
    <property type="term" value="C:mitochondrial inner membrane"/>
    <property type="evidence" value="ECO:0007669"/>
    <property type="project" value="UniProtKB-SubCell"/>
</dbReference>
<dbReference type="GO" id="GO:0031966">
    <property type="term" value="C:mitochondrial membrane"/>
    <property type="evidence" value="ECO:0000318"/>
    <property type="project" value="GO_Central"/>
</dbReference>
<dbReference type="GO" id="GO:0034551">
    <property type="term" value="P:mitochondrial respiratory chain complex III assembly"/>
    <property type="evidence" value="ECO:0000318"/>
    <property type="project" value="GO_Central"/>
</dbReference>
<dbReference type="InterPro" id="IPR012420">
    <property type="entry name" value="Cbp4"/>
</dbReference>
<dbReference type="PANTHER" id="PTHR28202">
    <property type="entry name" value="ASSEMBLY FACTOR CBP4"/>
    <property type="match status" value="1"/>
</dbReference>
<dbReference type="PANTHER" id="PTHR28202:SF1">
    <property type="entry name" value="ASSEMBLY FACTOR CBP4"/>
    <property type="match status" value="1"/>
</dbReference>
<dbReference type="Pfam" id="PF07960">
    <property type="entry name" value="CBP4"/>
    <property type="match status" value="1"/>
</dbReference>
<keyword id="KW-0143">Chaperone</keyword>
<keyword id="KW-0175">Coiled coil</keyword>
<keyword id="KW-0472">Membrane</keyword>
<keyword id="KW-0496">Mitochondrion</keyword>
<keyword id="KW-0999">Mitochondrion inner membrane</keyword>
<keyword id="KW-0812">Transmembrane</keyword>
<keyword id="KW-1133">Transmembrane helix</keyword>
<organism>
    <name type="scientific">Phaeosphaeria nodorum (strain SN15 / ATCC MYA-4574 / FGSC 10173)</name>
    <name type="common">Glume blotch fungus</name>
    <name type="synonym">Parastagonospora nodorum</name>
    <dbReference type="NCBI Taxonomy" id="321614"/>
    <lineage>
        <taxon>Eukaryota</taxon>
        <taxon>Fungi</taxon>
        <taxon>Dikarya</taxon>
        <taxon>Ascomycota</taxon>
        <taxon>Pezizomycotina</taxon>
        <taxon>Dothideomycetes</taxon>
        <taxon>Pleosporomycetidae</taxon>
        <taxon>Pleosporales</taxon>
        <taxon>Pleosporineae</taxon>
        <taxon>Phaeosphaeriaceae</taxon>
        <taxon>Parastagonospora</taxon>
    </lineage>
</organism>
<feature type="chain" id="PRO_0000330134" description="Assembly factor CBP4">
    <location>
        <begin position="1"/>
        <end position="117"/>
    </location>
</feature>
<feature type="transmembrane region" description="Helical" evidence="2">
    <location>
        <begin position="7"/>
        <end position="29"/>
    </location>
</feature>
<feature type="region of interest" description="Disordered" evidence="3">
    <location>
        <begin position="76"/>
        <end position="117"/>
    </location>
</feature>
<feature type="coiled-coil region" evidence="2">
    <location>
        <begin position="45"/>
        <end position="71"/>
    </location>
</feature>
<feature type="compositionally biased region" description="Basic and acidic residues" evidence="3">
    <location>
        <begin position="80"/>
        <end position="111"/>
    </location>
</feature>
<reference key="1">
    <citation type="journal article" date="2007" name="Plant Cell">
        <title>Dothideomycete-plant interactions illuminated by genome sequencing and EST analysis of the wheat pathogen Stagonospora nodorum.</title>
        <authorList>
            <person name="Hane J.K."/>
            <person name="Lowe R.G.T."/>
            <person name="Solomon P.S."/>
            <person name="Tan K.-C."/>
            <person name="Schoch C.L."/>
            <person name="Spatafora J.W."/>
            <person name="Crous P.W."/>
            <person name="Kodira C.D."/>
            <person name="Birren B.W."/>
            <person name="Galagan J.E."/>
            <person name="Torriani S.F.F."/>
            <person name="McDonald B.A."/>
            <person name="Oliver R.P."/>
        </authorList>
    </citation>
    <scope>NUCLEOTIDE SEQUENCE [LARGE SCALE GENOMIC DNA]</scope>
    <source>
        <strain>SN15 / ATCC MYA-4574 / FGSC 10173</strain>
    </source>
</reference>